<name>CARA_NITV9</name>
<protein>
    <recommendedName>
        <fullName evidence="1">Carbamoyl phosphate synthase small chain</fullName>
        <ecNumber evidence="1">6.3.5.5</ecNumber>
    </recommendedName>
    <alternativeName>
        <fullName evidence="1">Carbamoyl phosphate synthetase glutamine chain</fullName>
    </alternativeName>
</protein>
<reference key="1">
    <citation type="submission" date="2002-08" db="EMBL/GenBank/DDBJ databases">
        <title>The nucleotide sequences of fur, rbr, rlp, and prfC of Desulfovibrio vulgaris (Miyazaki F).</title>
        <authorList>
            <person name="Kitamura M."/>
            <person name="Numata S."/>
            <person name="Katsura S."/>
            <person name="Inoue H."/>
        </authorList>
    </citation>
    <scope>NUCLEOTIDE SEQUENCE [GENOMIC DNA]</scope>
</reference>
<reference key="2">
    <citation type="submission" date="2008-10" db="EMBL/GenBank/DDBJ databases">
        <title>Complete sequence of Desulfovibrio vulgaris str. 'Miyazaki F'.</title>
        <authorList>
            <person name="Lucas S."/>
            <person name="Copeland A."/>
            <person name="Lapidus A."/>
            <person name="Glavina del Rio T."/>
            <person name="Dalin E."/>
            <person name="Tice H."/>
            <person name="Bruce D."/>
            <person name="Goodwin L."/>
            <person name="Pitluck S."/>
            <person name="Sims D."/>
            <person name="Brettin T."/>
            <person name="Detter J.C."/>
            <person name="Han C."/>
            <person name="Larimer F."/>
            <person name="Land M."/>
            <person name="Hauser L."/>
            <person name="Kyrpides N."/>
            <person name="Mikhailova N."/>
            <person name="Hazen T.C."/>
            <person name="Richardson P."/>
        </authorList>
    </citation>
    <scope>NUCLEOTIDE SEQUENCE [LARGE SCALE GENOMIC DNA]</scope>
    <source>
        <strain>DSM 19637 / Miyazaki F</strain>
    </source>
</reference>
<comment type="function">
    <text evidence="1">Small subunit of the glutamine-dependent carbamoyl phosphate synthetase (CPSase). CPSase catalyzes the formation of carbamoyl phosphate from the ammonia moiety of glutamine, carbonate, and phosphate donated by ATP, constituting the first step of 2 biosynthetic pathways, one leading to arginine and/or urea and the other to pyrimidine nucleotides. The small subunit (glutamine amidotransferase) binds and cleaves glutamine to supply the large subunit with the substrate ammonia.</text>
</comment>
<comment type="catalytic activity">
    <reaction evidence="1">
        <text>hydrogencarbonate + L-glutamine + 2 ATP + H2O = carbamoyl phosphate + L-glutamate + 2 ADP + phosphate + 2 H(+)</text>
        <dbReference type="Rhea" id="RHEA:18633"/>
        <dbReference type="ChEBI" id="CHEBI:15377"/>
        <dbReference type="ChEBI" id="CHEBI:15378"/>
        <dbReference type="ChEBI" id="CHEBI:17544"/>
        <dbReference type="ChEBI" id="CHEBI:29985"/>
        <dbReference type="ChEBI" id="CHEBI:30616"/>
        <dbReference type="ChEBI" id="CHEBI:43474"/>
        <dbReference type="ChEBI" id="CHEBI:58228"/>
        <dbReference type="ChEBI" id="CHEBI:58359"/>
        <dbReference type="ChEBI" id="CHEBI:456216"/>
        <dbReference type="EC" id="6.3.5.5"/>
    </reaction>
</comment>
<comment type="catalytic activity">
    <molecule>Carbamoyl phosphate synthase small chain</molecule>
    <reaction evidence="1">
        <text>L-glutamine + H2O = L-glutamate + NH4(+)</text>
        <dbReference type="Rhea" id="RHEA:15889"/>
        <dbReference type="ChEBI" id="CHEBI:15377"/>
        <dbReference type="ChEBI" id="CHEBI:28938"/>
        <dbReference type="ChEBI" id="CHEBI:29985"/>
        <dbReference type="ChEBI" id="CHEBI:58359"/>
    </reaction>
</comment>
<comment type="pathway">
    <text evidence="1">Amino-acid biosynthesis; L-arginine biosynthesis; carbamoyl phosphate from bicarbonate: step 1/1.</text>
</comment>
<comment type="pathway">
    <text evidence="1">Pyrimidine metabolism; UMP biosynthesis via de novo pathway; (S)-dihydroorotate from bicarbonate: step 1/3.</text>
</comment>
<comment type="subunit">
    <text evidence="1">Composed of two chains; the small (or glutamine) chain promotes the hydrolysis of glutamine to ammonia, which is used by the large (or ammonia) chain to synthesize carbamoyl phosphate. Tetramer of heterodimers (alpha,beta)4.</text>
</comment>
<comment type="similarity">
    <text evidence="1">Belongs to the CarA family.</text>
</comment>
<sequence length="376" mass="41137">MRAFLALEDGFVLEGRSFTGRGESGGEVIFNTGMTGYQEVLTDPSYAGQMVCMTYPLIGNYGVTAEDMESGKVHVEAFIVKECCRTPSNWRAIMSLPDYLAQHGVMGIEGIDTRALTRHLRINGAMRGIISTETDDRDELVRRARALPTMEGQNLVTRVAPATPYRWDGTRPQPVQLAADGAYAWPGTGPRLVVYDYGIKWNILRLLTDQGFDLLVVPPSFTAMQVAASGAEAVFLSNGPGDPATLTDEVREIRVMTERMPVAGICLGHQLLGHALGGTTHKLKFGHHGCNHPVKDLVTGHIEISSQNHGFCVDIESVPDVEITHVNLNDGTLEGFAHKTRPILAVQHHPEASPGPTDSRYFFARFRGMVREAVGR</sequence>
<gene>
    <name evidence="1" type="primary">carA</name>
    <name type="ordered locus">DvMF_2370</name>
</gene>
<proteinExistence type="inferred from homology"/>
<keyword id="KW-0028">Amino-acid biosynthesis</keyword>
<keyword id="KW-0055">Arginine biosynthesis</keyword>
<keyword id="KW-0067">ATP-binding</keyword>
<keyword id="KW-0315">Glutamine amidotransferase</keyword>
<keyword id="KW-0436">Ligase</keyword>
<keyword id="KW-0547">Nucleotide-binding</keyword>
<keyword id="KW-0665">Pyrimidine biosynthesis</keyword>
<feature type="chain" id="PRO_0000112273" description="Carbamoyl phosphate synthase small chain">
    <location>
        <begin position="1"/>
        <end position="376"/>
    </location>
</feature>
<feature type="domain" description="Glutamine amidotransferase type-1" evidence="1">
    <location>
        <begin position="191"/>
        <end position="376"/>
    </location>
</feature>
<feature type="region of interest" description="CPSase" evidence="1">
    <location>
        <begin position="1"/>
        <end position="187"/>
    </location>
</feature>
<feature type="active site" description="Nucleophile" evidence="1">
    <location>
        <position position="266"/>
    </location>
</feature>
<feature type="active site" evidence="1">
    <location>
        <position position="349"/>
    </location>
</feature>
<feature type="active site" evidence="1">
    <location>
        <position position="351"/>
    </location>
</feature>
<feature type="binding site" evidence="1">
    <location>
        <position position="45"/>
    </location>
    <ligand>
        <name>L-glutamine</name>
        <dbReference type="ChEBI" id="CHEBI:58359"/>
    </ligand>
</feature>
<feature type="binding site" evidence="1">
    <location>
        <position position="239"/>
    </location>
    <ligand>
        <name>L-glutamine</name>
        <dbReference type="ChEBI" id="CHEBI:58359"/>
    </ligand>
</feature>
<feature type="binding site" evidence="1">
    <location>
        <position position="241"/>
    </location>
    <ligand>
        <name>L-glutamine</name>
        <dbReference type="ChEBI" id="CHEBI:58359"/>
    </ligand>
</feature>
<feature type="binding site" evidence="1">
    <location>
        <position position="267"/>
    </location>
    <ligand>
        <name>L-glutamine</name>
        <dbReference type="ChEBI" id="CHEBI:58359"/>
    </ligand>
</feature>
<feature type="binding site" evidence="1">
    <location>
        <position position="270"/>
    </location>
    <ligand>
        <name>L-glutamine</name>
        <dbReference type="ChEBI" id="CHEBI:58359"/>
    </ligand>
</feature>
<feature type="binding site" evidence="1">
    <location>
        <position position="308"/>
    </location>
    <ligand>
        <name>L-glutamine</name>
        <dbReference type="ChEBI" id="CHEBI:58359"/>
    </ligand>
</feature>
<feature type="binding site" evidence="1">
    <location>
        <position position="310"/>
    </location>
    <ligand>
        <name>L-glutamine</name>
        <dbReference type="ChEBI" id="CHEBI:58359"/>
    </ligand>
</feature>
<feature type="binding site" evidence="1">
    <location>
        <position position="311"/>
    </location>
    <ligand>
        <name>L-glutamine</name>
        <dbReference type="ChEBI" id="CHEBI:58359"/>
    </ligand>
</feature>
<evidence type="ECO:0000255" key="1">
    <source>
        <dbReference type="HAMAP-Rule" id="MF_01209"/>
    </source>
</evidence>
<accession>Q8KZA0</accession>
<accession>B8DIL3</accession>
<organism>
    <name type="scientific">Nitratidesulfovibrio vulgaris (strain DSM 19637 / Miyazaki F)</name>
    <name type="common">Desulfovibrio vulgaris</name>
    <dbReference type="NCBI Taxonomy" id="883"/>
    <lineage>
        <taxon>Bacteria</taxon>
        <taxon>Pseudomonadati</taxon>
        <taxon>Thermodesulfobacteriota</taxon>
        <taxon>Desulfovibrionia</taxon>
        <taxon>Desulfovibrionales</taxon>
        <taxon>Desulfovibrionaceae</taxon>
        <taxon>Nitratidesulfovibrio</taxon>
    </lineage>
</organism>
<dbReference type="EC" id="6.3.5.5" evidence="1"/>
<dbReference type="EMBL" id="AB090267">
    <property type="protein sequence ID" value="BAC10584.1"/>
    <property type="molecule type" value="Genomic_DNA"/>
</dbReference>
<dbReference type="EMBL" id="CP001197">
    <property type="protein sequence ID" value="ACL09311.1"/>
    <property type="molecule type" value="Genomic_DNA"/>
</dbReference>
<dbReference type="SMR" id="Q8KZA0"/>
<dbReference type="STRING" id="883.DvMF_2370"/>
<dbReference type="MEROPS" id="C26.A04"/>
<dbReference type="KEGG" id="dvm:DvMF_2370"/>
<dbReference type="eggNOG" id="COG0505">
    <property type="taxonomic scope" value="Bacteria"/>
</dbReference>
<dbReference type="HOGENOM" id="CLU_035901_2_1_7"/>
<dbReference type="OrthoDB" id="9804328at2"/>
<dbReference type="UniPathway" id="UPA00068">
    <property type="reaction ID" value="UER00171"/>
</dbReference>
<dbReference type="UniPathway" id="UPA00070">
    <property type="reaction ID" value="UER00115"/>
</dbReference>
<dbReference type="GO" id="GO:0005524">
    <property type="term" value="F:ATP binding"/>
    <property type="evidence" value="ECO:0007669"/>
    <property type="project" value="UniProtKB-UniRule"/>
</dbReference>
<dbReference type="GO" id="GO:0004088">
    <property type="term" value="F:carbamoyl-phosphate synthase (glutamine-hydrolyzing) activity"/>
    <property type="evidence" value="ECO:0007669"/>
    <property type="project" value="UniProtKB-UniRule"/>
</dbReference>
<dbReference type="GO" id="GO:0004359">
    <property type="term" value="F:glutaminase activity"/>
    <property type="evidence" value="ECO:0007669"/>
    <property type="project" value="RHEA"/>
</dbReference>
<dbReference type="GO" id="GO:0006207">
    <property type="term" value="P:'de novo' pyrimidine nucleobase biosynthetic process"/>
    <property type="evidence" value="ECO:0007669"/>
    <property type="project" value="InterPro"/>
</dbReference>
<dbReference type="GO" id="GO:0044205">
    <property type="term" value="P:'de novo' UMP biosynthetic process"/>
    <property type="evidence" value="ECO:0007669"/>
    <property type="project" value="UniProtKB-UniRule"/>
</dbReference>
<dbReference type="GO" id="GO:0006541">
    <property type="term" value="P:glutamine metabolic process"/>
    <property type="evidence" value="ECO:0007669"/>
    <property type="project" value="InterPro"/>
</dbReference>
<dbReference type="GO" id="GO:0006526">
    <property type="term" value="P:L-arginine biosynthetic process"/>
    <property type="evidence" value="ECO:0007669"/>
    <property type="project" value="UniProtKB-UniRule"/>
</dbReference>
<dbReference type="CDD" id="cd01744">
    <property type="entry name" value="GATase1_CPSase"/>
    <property type="match status" value="1"/>
</dbReference>
<dbReference type="FunFam" id="3.50.30.20:FF:000001">
    <property type="entry name" value="Carbamoyl-phosphate synthase small chain"/>
    <property type="match status" value="1"/>
</dbReference>
<dbReference type="Gene3D" id="3.40.50.880">
    <property type="match status" value="1"/>
</dbReference>
<dbReference type="Gene3D" id="3.50.30.20">
    <property type="entry name" value="Carbamoyl-phosphate synthase small subunit, N-terminal domain"/>
    <property type="match status" value="1"/>
</dbReference>
<dbReference type="HAMAP" id="MF_01209">
    <property type="entry name" value="CPSase_S_chain"/>
    <property type="match status" value="1"/>
</dbReference>
<dbReference type="InterPro" id="IPR050472">
    <property type="entry name" value="Anth_synth/Amidotransfase"/>
</dbReference>
<dbReference type="InterPro" id="IPR006274">
    <property type="entry name" value="CarbamoylP_synth_ssu"/>
</dbReference>
<dbReference type="InterPro" id="IPR002474">
    <property type="entry name" value="CarbamoylP_synth_ssu_N"/>
</dbReference>
<dbReference type="InterPro" id="IPR036480">
    <property type="entry name" value="CarbP_synth_ssu_N_sf"/>
</dbReference>
<dbReference type="InterPro" id="IPR029062">
    <property type="entry name" value="Class_I_gatase-like"/>
</dbReference>
<dbReference type="InterPro" id="IPR035686">
    <property type="entry name" value="CPSase_GATase1"/>
</dbReference>
<dbReference type="InterPro" id="IPR017926">
    <property type="entry name" value="GATASE"/>
</dbReference>
<dbReference type="NCBIfam" id="TIGR01368">
    <property type="entry name" value="CPSaseIIsmall"/>
    <property type="match status" value="1"/>
</dbReference>
<dbReference type="NCBIfam" id="NF009475">
    <property type="entry name" value="PRK12838.1"/>
    <property type="match status" value="1"/>
</dbReference>
<dbReference type="PANTHER" id="PTHR43418:SF7">
    <property type="entry name" value="CARBAMOYL-PHOSPHATE SYNTHASE SMALL CHAIN"/>
    <property type="match status" value="1"/>
</dbReference>
<dbReference type="PANTHER" id="PTHR43418">
    <property type="entry name" value="MULTIFUNCTIONAL TRYPTOPHAN BIOSYNTHESIS PROTEIN-RELATED"/>
    <property type="match status" value="1"/>
</dbReference>
<dbReference type="Pfam" id="PF00988">
    <property type="entry name" value="CPSase_sm_chain"/>
    <property type="match status" value="1"/>
</dbReference>
<dbReference type="Pfam" id="PF00117">
    <property type="entry name" value="GATase"/>
    <property type="match status" value="1"/>
</dbReference>
<dbReference type="PRINTS" id="PR00097">
    <property type="entry name" value="ANTSNTHASEII"/>
</dbReference>
<dbReference type="PRINTS" id="PR00099">
    <property type="entry name" value="CPSGATASE"/>
</dbReference>
<dbReference type="PRINTS" id="PR00096">
    <property type="entry name" value="GATASE"/>
</dbReference>
<dbReference type="SMART" id="SM01097">
    <property type="entry name" value="CPSase_sm_chain"/>
    <property type="match status" value="1"/>
</dbReference>
<dbReference type="SUPFAM" id="SSF52021">
    <property type="entry name" value="Carbamoyl phosphate synthetase, small subunit N-terminal domain"/>
    <property type="match status" value="1"/>
</dbReference>
<dbReference type="SUPFAM" id="SSF52317">
    <property type="entry name" value="Class I glutamine amidotransferase-like"/>
    <property type="match status" value="1"/>
</dbReference>
<dbReference type="PROSITE" id="PS51273">
    <property type="entry name" value="GATASE_TYPE_1"/>
    <property type="match status" value="1"/>
</dbReference>